<comment type="function">
    <text evidence="1">Catalyzes the ATP-dependent amidation of the two carboxylate groups at positions a and c of cobyrinate, using either L-glutamine or ammonia as the nitrogen source.</text>
</comment>
<comment type="catalytic activity">
    <reaction evidence="1">
        <text>cob(II)yrinate + 2 L-glutamine + 2 ATP + 2 H2O = cob(II)yrinate a,c diamide + 2 L-glutamate + 2 ADP + 2 phosphate + 2 H(+)</text>
        <dbReference type="Rhea" id="RHEA:26289"/>
        <dbReference type="ChEBI" id="CHEBI:15377"/>
        <dbReference type="ChEBI" id="CHEBI:15378"/>
        <dbReference type="ChEBI" id="CHEBI:29985"/>
        <dbReference type="ChEBI" id="CHEBI:30616"/>
        <dbReference type="ChEBI" id="CHEBI:43474"/>
        <dbReference type="ChEBI" id="CHEBI:58359"/>
        <dbReference type="ChEBI" id="CHEBI:58537"/>
        <dbReference type="ChEBI" id="CHEBI:58894"/>
        <dbReference type="ChEBI" id="CHEBI:456216"/>
        <dbReference type="EC" id="6.3.5.11"/>
    </reaction>
</comment>
<comment type="cofactor">
    <cofactor evidence="1">
        <name>Mg(2+)</name>
        <dbReference type="ChEBI" id="CHEBI:18420"/>
    </cofactor>
</comment>
<comment type="pathway">
    <text evidence="1">Cofactor biosynthesis; adenosylcobalamin biosynthesis; cob(II)yrinate a,c-diamide from sirohydrochlorin (anaerobic route): step 10/10.</text>
</comment>
<comment type="domain">
    <text evidence="1">Comprises of two domains. The C-terminal domain contains the binding site for glutamine and catalyzes the hydrolysis of this substrate to glutamate and ammonia. The N-terminal domain is anticipated to bind ATP and cobyrinate and catalyzes the ultimate synthesis of the diamide product. The ammonia produced via the glutaminase domain is probably translocated to the adjacent domain via a molecular tunnel, where it reacts with an activated intermediate.</text>
</comment>
<comment type="miscellaneous">
    <text evidence="1">The a and c carboxylates of cobyrinate are activated for nucleophilic attack via formation of a phosphorylated intermediate by ATP. CbiA catalyzes first the amidation of the c-carboxylate, and then that of the a-carboxylate.</text>
</comment>
<comment type="similarity">
    <text evidence="1">Belongs to the CobB/CbiA family.</text>
</comment>
<accession>Q980B1</accession>
<dbReference type="EC" id="6.3.5.11" evidence="1"/>
<dbReference type="EMBL" id="AE006641">
    <property type="protein sequence ID" value="AAK40733.1"/>
    <property type="molecule type" value="Genomic_DNA"/>
</dbReference>
<dbReference type="PIR" id="F90184">
    <property type="entry name" value="F90184"/>
</dbReference>
<dbReference type="RefSeq" id="WP_009988783.1">
    <property type="nucleotide sequence ID" value="NC_002754.1"/>
</dbReference>
<dbReference type="SMR" id="Q980B1"/>
<dbReference type="FunCoup" id="Q980B1">
    <property type="interactions" value="98"/>
</dbReference>
<dbReference type="STRING" id="273057.SSO0404"/>
<dbReference type="PaxDb" id="273057-SSO0404"/>
<dbReference type="DNASU" id="1455543"/>
<dbReference type="EnsemblBacteria" id="AAK40733">
    <property type="protein sequence ID" value="AAK40733"/>
    <property type="gene ID" value="SSO0404"/>
</dbReference>
<dbReference type="KEGG" id="sso:SSO0404"/>
<dbReference type="PATRIC" id="fig|273057.12.peg.400"/>
<dbReference type="eggNOG" id="arCOG00106">
    <property type="taxonomic scope" value="Archaea"/>
</dbReference>
<dbReference type="HOGENOM" id="CLU_022752_2_1_2"/>
<dbReference type="InParanoid" id="Q980B1"/>
<dbReference type="PhylomeDB" id="Q980B1"/>
<dbReference type="UniPathway" id="UPA00148">
    <property type="reaction ID" value="UER00231"/>
</dbReference>
<dbReference type="Proteomes" id="UP000001974">
    <property type="component" value="Chromosome"/>
</dbReference>
<dbReference type="GO" id="GO:0005524">
    <property type="term" value="F:ATP binding"/>
    <property type="evidence" value="ECO:0007669"/>
    <property type="project" value="UniProtKB-UniRule"/>
</dbReference>
<dbReference type="GO" id="GO:0042242">
    <property type="term" value="F:cobyrinic acid a,c-diamide synthase activity"/>
    <property type="evidence" value="ECO:0007669"/>
    <property type="project" value="UniProtKB-UniRule"/>
</dbReference>
<dbReference type="GO" id="GO:0009236">
    <property type="term" value="P:cobalamin biosynthetic process"/>
    <property type="evidence" value="ECO:0007669"/>
    <property type="project" value="UniProtKB-UniRule"/>
</dbReference>
<dbReference type="CDD" id="cd05388">
    <property type="entry name" value="CobB_N"/>
    <property type="match status" value="1"/>
</dbReference>
<dbReference type="CDD" id="cd03130">
    <property type="entry name" value="GATase1_CobB"/>
    <property type="match status" value="1"/>
</dbReference>
<dbReference type="Gene3D" id="3.40.50.300">
    <property type="entry name" value="P-loop containing nucleotide triphosphate hydrolases"/>
    <property type="match status" value="1"/>
</dbReference>
<dbReference type="HAMAP" id="MF_00027">
    <property type="entry name" value="CobB_CbiA"/>
    <property type="match status" value="1"/>
</dbReference>
<dbReference type="InterPro" id="IPR004484">
    <property type="entry name" value="CbiA/CobB_synth"/>
</dbReference>
<dbReference type="InterPro" id="IPR029062">
    <property type="entry name" value="Class_I_gatase-like"/>
</dbReference>
<dbReference type="InterPro" id="IPR002586">
    <property type="entry name" value="CobQ/CobB/MinD/ParA_Nub-bd_dom"/>
</dbReference>
<dbReference type="InterPro" id="IPR011698">
    <property type="entry name" value="GATase_3"/>
</dbReference>
<dbReference type="InterPro" id="IPR027417">
    <property type="entry name" value="P-loop_NTPase"/>
</dbReference>
<dbReference type="NCBIfam" id="TIGR00379">
    <property type="entry name" value="cobB"/>
    <property type="match status" value="1"/>
</dbReference>
<dbReference type="NCBIfam" id="NF002204">
    <property type="entry name" value="PRK01077.1"/>
    <property type="match status" value="1"/>
</dbReference>
<dbReference type="PANTHER" id="PTHR43873">
    <property type="entry name" value="COBYRINATE A,C-DIAMIDE SYNTHASE"/>
    <property type="match status" value="1"/>
</dbReference>
<dbReference type="PANTHER" id="PTHR43873:SF1">
    <property type="entry name" value="COBYRINATE A,C-DIAMIDE SYNTHASE"/>
    <property type="match status" value="1"/>
</dbReference>
<dbReference type="Pfam" id="PF01656">
    <property type="entry name" value="CbiA"/>
    <property type="match status" value="1"/>
</dbReference>
<dbReference type="Pfam" id="PF07685">
    <property type="entry name" value="GATase_3"/>
    <property type="match status" value="1"/>
</dbReference>
<dbReference type="SUPFAM" id="SSF52317">
    <property type="entry name" value="Class I glutamine amidotransferase-like"/>
    <property type="match status" value="1"/>
</dbReference>
<dbReference type="SUPFAM" id="SSF52540">
    <property type="entry name" value="P-loop containing nucleoside triphosphate hydrolases"/>
    <property type="match status" value="1"/>
</dbReference>
<dbReference type="PROSITE" id="PS51274">
    <property type="entry name" value="GATASE_COBBQ"/>
    <property type="match status" value="1"/>
</dbReference>
<proteinExistence type="inferred from homology"/>
<keyword id="KW-0067">ATP-binding</keyword>
<keyword id="KW-0169">Cobalamin biosynthesis</keyword>
<keyword id="KW-0315">Glutamine amidotransferase</keyword>
<keyword id="KW-0436">Ligase</keyword>
<keyword id="KW-0460">Magnesium</keyword>
<keyword id="KW-0547">Nucleotide-binding</keyword>
<keyword id="KW-1185">Reference proteome</keyword>
<name>CBIA_SACS2</name>
<feature type="chain" id="PRO_0000141280" description="Cobyrinate a,c-diamide synthase">
    <location>
        <begin position="1"/>
        <end position="434"/>
    </location>
</feature>
<feature type="domain" description="GATase cobBQ-type" evidence="1">
    <location>
        <begin position="239"/>
        <end position="430"/>
    </location>
</feature>
<feature type="active site" description="Nucleophile" evidence="1">
    <location>
        <position position="320"/>
    </location>
</feature>
<feature type="site" description="Increases nucleophilicity of active site Cys" evidence="1">
    <location>
        <position position="422"/>
    </location>
</feature>
<gene>
    <name evidence="1" type="primary">cbiA</name>
    <name type="ordered locus">SSO0404</name>
</gene>
<evidence type="ECO:0000255" key="1">
    <source>
        <dbReference type="HAMAP-Rule" id="MF_00027"/>
    </source>
</evidence>
<protein>
    <recommendedName>
        <fullName evidence="1">Cobyrinate a,c-diamide synthase</fullName>
        <ecNumber evidence="1">6.3.5.11</ecNumber>
    </recommendedName>
    <alternativeName>
        <fullName evidence="1">Cobyrinic acid a,c-diamide synthetase</fullName>
    </alternativeName>
</protein>
<reference key="1">
    <citation type="journal article" date="2001" name="Proc. Natl. Acad. Sci. U.S.A.">
        <title>The complete genome of the crenarchaeon Sulfolobus solfataricus P2.</title>
        <authorList>
            <person name="She Q."/>
            <person name="Singh R.K."/>
            <person name="Confalonieri F."/>
            <person name="Zivanovic Y."/>
            <person name="Allard G."/>
            <person name="Awayez M.J."/>
            <person name="Chan-Weiher C.C.-Y."/>
            <person name="Clausen I.G."/>
            <person name="Curtis B.A."/>
            <person name="De Moors A."/>
            <person name="Erauso G."/>
            <person name="Fletcher C."/>
            <person name="Gordon P.M.K."/>
            <person name="Heikamp-de Jong I."/>
            <person name="Jeffries A.C."/>
            <person name="Kozera C.J."/>
            <person name="Medina N."/>
            <person name="Peng X."/>
            <person name="Thi-Ngoc H.P."/>
            <person name="Redder P."/>
            <person name="Schenk M.E."/>
            <person name="Theriault C."/>
            <person name="Tolstrup N."/>
            <person name="Charlebois R.L."/>
            <person name="Doolittle W.F."/>
            <person name="Duguet M."/>
            <person name="Gaasterland T."/>
            <person name="Garrett R.A."/>
            <person name="Ragan M.A."/>
            <person name="Sensen C.W."/>
            <person name="Van der Oost J."/>
        </authorList>
    </citation>
    <scope>NUCLEOTIDE SEQUENCE [LARGE SCALE GENOMIC DNA]</scope>
    <source>
        <strain>ATCC 35092 / DSM 1617 / JCM 11322 / P2</strain>
    </source>
</reference>
<sequence>MKRILLSSDRSGSGKTLITSAIMRALSKKYKVRGFKAGPDFIDPGYHKIATGFPSINLDLWMMGKNNVKRSLAKYGKEFDIGIIEGVMGLYDGVDTLYSTYELAKVTKTPIILIINCSNIGSTVGAIVKGLKYYRSDVSIRGVIFNKIASETHYNYCRNAVEDVEVLGYVPFDKNLEIKSRHLGLVTVEDNREVQNLIRYASELVEKYVDLDKIYEMASDEDLEIDLPEDNESNGVKRKMAIAYDPAFSFYYQENLDILKNKYELEFFSPLNNEYVEDAEAIYIGGGYPELHLNELEKSTRTKKWLKNMSYAGVKIYAECGGLMYLSKNLIDENNKNHSMTGIFDIDIKTKDKLTIGYTELEAVKENFIVNKNNVVRGHEFHVSKPISVNEKEFVFKVRIGKGIINKLDGVKSNNTVASYSHLHFSNFQLRIVF</sequence>
<organism>
    <name type="scientific">Saccharolobus solfataricus (strain ATCC 35092 / DSM 1617 / JCM 11322 / P2)</name>
    <name type="common">Sulfolobus solfataricus</name>
    <dbReference type="NCBI Taxonomy" id="273057"/>
    <lineage>
        <taxon>Archaea</taxon>
        <taxon>Thermoproteota</taxon>
        <taxon>Thermoprotei</taxon>
        <taxon>Sulfolobales</taxon>
        <taxon>Sulfolobaceae</taxon>
        <taxon>Saccharolobus</taxon>
    </lineage>
</organism>